<keyword id="KW-0046">Antibiotic resistance</keyword>
<keyword id="KW-0067">ATP-binding</keyword>
<keyword id="KW-0997">Cell inner membrane</keyword>
<keyword id="KW-1003">Cell membrane</keyword>
<keyword id="KW-0472">Membrane</keyword>
<keyword id="KW-0547">Nucleotide-binding</keyword>
<keyword id="KW-1185">Reference proteome</keyword>
<keyword id="KW-1278">Translocase</keyword>
<keyword id="KW-0812">Transmembrane</keyword>
<keyword id="KW-1133">Transmembrane helix</keyword>
<keyword id="KW-0813">Transport</keyword>
<accession>Q3Z3Q4</accession>
<sequence length="648" mass="70643">MTPLLELKDIRRSYPAGNEQVEVLKGISLDIYAGEMVAIVGASGSGKSTLMNILGCLDKATSGTYRVAGQDVATLDADALAQLRREHFGFIFQRYHLLSHLTAEQNVEVPAVYAGLERKQRLLRAQELLQRLGLEDRTEYYPAQLSGGQQQRVSIARALMNGGQVILADEPTGALDSHSGEEVMAILHQLRDRGHTVIIVTHDPQVAAQAERVIEIRDGEIVRNPPAIEKVNVAGGTEPVVNTVSGWRQFVSGFNEALTMAWRALAANKMRTLLTMLGIIIGIASVVSIVVVGDAAKQMVLADIRSIGTNTIDVYPGKDFGDDDPQYQQALKYDDLIAIQKQPWVASATPAVSQNLRLRYNNVDVAASANGVSGDYFNVYGMTFSEGNTFNQEQLNGRAQVVVLDSNTRRQLFPHKADVVGEVILVGNMPARVIGVAEEKQSMFGSSKVLRVWLPYSTMSGRVMGQSWLNSITVRVKEGFDSAEAEQQLTRLLSLRHGKKDFFTWNMDGVLKTVEKTTRTLQLFLTLVAVISLVVGGIGVMNIMLVSVTERTREIGIRMAVGARASDVLQQFLIEAVLVCLVGGALGITLSLLIAFTLQLFLPGWEIGFSPLALLLAFLCSTATGILFGWLPARNAARLDPVDALARE</sequence>
<gene>
    <name evidence="1" type="primary">macB</name>
    <name type="ordered locus">SSON_0866</name>
</gene>
<feature type="chain" id="PRO_0000269982" description="Macrolide export ATP-binding/permease protein MacB">
    <location>
        <begin position="1"/>
        <end position="648"/>
    </location>
</feature>
<feature type="transmembrane region" description="Helical" evidence="1">
    <location>
        <begin position="273"/>
        <end position="293"/>
    </location>
</feature>
<feature type="transmembrane region" description="Helical" evidence="1">
    <location>
        <begin position="523"/>
        <end position="543"/>
    </location>
</feature>
<feature type="transmembrane region" description="Helical" evidence="1">
    <location>
        <begin position="576"/>
        <end position="596"/>
    </location>
</feature>
<feature type="transmembrane region" description="Helical" evidence="1">
    <location>
        <begin position="600"/>
        <end position="620"/>
    </location>
</feature>
<feature type="domain" description="ABC transporter" evidence="1">
    <location>
        <begin position="5"/>
        <end position="243"/>
    </location>
</feature>
<feature type="binding site" evidence="1">
    <location>
        <begin position="41"/>
        <end position="48"/>
    </location>
    <ligand>
        <name>ATP</name>
        <dbReference type="ChEBI" id="CHEBI:30616"/>
    </ligand>
</feature>
<evidence type="ECO:0000255" key="1">
    <source>
        <dbReference type="HAMAP-Rule" id="MF_01720"/>
    </source>
</evidence>
<reference key="1">
    <citation type="journal article" date="2005" name="Nucleic Acids Res.">
        <title>Genome dynamics and diversity of Shigella species, the etiologic agents of bacillary dysentery.</title>
        <authorList>
            <person name="Yang F."/>
            <person name="Yang J."/>
            <person name="Zhang X."/>
            <person name="Chen L."/>
            <person name="Jiang Y."/>
            <person name="Yan Y."/>
            <person name="Tang X."/>
            <person name="Wang J."/>
            <person name="Xiong Z."/>
            <person name="Dong J."/>
            <person name="Xue Y."/>
            <person name="Zhu Y."/>
            <person name="Xu X."/>
            <person name="Sun L."/>
            <person name="Chen S."/>
            <person name="Nie H."/>
            <person name="Peng J."/>
            <person name="Xu J."/>
            <person name="Wang Y."/>
            <person name="Yuan Z."/>
            <person name="Wen Y."/>
            <person name="Yao Z."/>
            <person name="Shen Y."/>
            <person name="Qiang B."/>
            <person name="Hou Y."/>
            <person name="Yu J."/>
            <person name="Jin Q."/>
        </authorList>
    </citation>
    <scope>NUCLEOTIDE SEQUENCE [LARGE SCALE GENOMIC DNA]</scope>
    <source>
        <strain>Ss046</strain>
    </source>
</reference>
<dbReference type="EC" id="7.6.2.-" evidence="1"/>
<dbReference type="EMBL" id="CP000038">
    <property type="protein sequence ID" value="AAZ87608.1"/>
    <property type="molecule type" value="Genomic_DNA"/>
</dbReference>
<dbReference type="RefSeq" id="WP_000188203.1">
    <property type="nucleotide sequence ID" value="NC_007384.1"/>
</dbReference>
<dbReference type="SMR" id="Q3Z3Q4"/>
<dbReference type="GeneID" id="93776541"/>
<dbReference type="KEGG" id="ssn:SSON_0866"/>
<dbReference type="HOGENOM" id="CLU_000604_78_2_6"/>
<dbReference type="Proteomes" id="UP000002529">
    <property type="component" value="Chromosome"/>
</dbReference>
<dbReference type="GO" id="GO:0005886">
    <property type="term" value="C:plasma membrane"/>
    <property type="evidence" value="ECO:0007669"/>
    <property type="project" value="UniProtKB-SubCell"/>
</dbReference>
<dbReference type="GO" id="GO:0005524">
    <property type="term" value="F:ATP binding"/>
    <property type="evidence" value="ECO:0007669"/>
    <property type="project" value="UniProtKB-KW"/>
</dbReference>
<dbReference type="GO" id="GO:0016887">
    <property type="term" value="F:ATP hydrolysis activity"/>
    <property type="evidence" value="ECO:0007669"/>
    <property type="project" value="InterPro"/>
</dbReference>
<dbReference type="GO" id="GO:0022857">
    <property type="term" value="F:transmembrane transporter activity"/>
    <property type="evidence" value="ECO:0007669"/>
    <property type="project" value="TreeGrafter"/>
</dbReference>
<dbReference type="GO" id="GO:0046677">
    <property type="term" value="P:response to antibiotic"/>
    <property type="evidence" value="ECO:0007669"/>
    <property type="project" value="UniProtKB-KW"/>
</dbReference>
<dbReference type="CDD" id="cd03255">
    <property type="entry name" value="ABC_MJ0796_LolCDE_FtsE"/>
    <property type="match status" value="1"/>
</dbReference>
<dbReference type="FunFam" id="3.40.50.300:FF:000032">
    <property type="entry name" value="Export ABC transporter ATP-binding protein"/>
    <property type="match status" value="1"/>
</dbReference>
<dbReference type="Gene3D" id="3.40.50.300">
    <property type="entry name" value="P-loop containing nucleotide triphosphate hydrolases"/>
    <property type="match status" value="1"/>
</dbReference>
<dbReference type="InterPro" id="IPR003593">
    <property type="entry name" value="AAA+_ATPase"/>
</dbReference>
<dbReference type="InterPro" id="IPR003838">
    <property type="entry name" value="ABC3_permease_C"/>
</dbReference>
<dbReference type="InterPro" id="IPR003439">
    <property type="entry name" value="ABC_transporter-like_ATP-bd"/>
</dbReference>
<dbReference type="InterPro" id="IPR017871">
    <property type="entry name" value="ABC_transporter-like_CS"/>
</dbReference>
<dbReference type="InterPro" id="IPR017911">
    <property type="entry name" value="MacB-like_ATP-bd"/>
</dbReference>
<dbReference type="InterPro" id="IPR025857">
    <property type="entry name" value="MacB_PCD"/>
</dbReference>
<dbReference type="InterPro" id="IPR050250">
    <property type="entry name" value="Macrolide_Exporter_MacB"/>
</dbReference>
<dbReference type="InterPro" id="IPR027417">
    <property type="entry name" value="P-loop_NTPase"/>
</dbReference>
<dbReference type="NCBIfam" id="NF007826">
    <property type="entry name" value="PRK10535.1"/>
    <property type="match status" value="1"/>
</dbReference>
<dbReference type="PANTHER" id="PTHR30572:SF7">
    <property type="entry name" value="MACROLIDE EXPORT ATP-BINDING_PERMEASE PROTEIN MACB"/>
    <property type="match status" value="1"/>
</dbReference>
<dbReference type="PANTHER" id="PTHR30572">
    <property type="entry name" value="MEMBRANE COMPONENT OF TRANSPORTER-RELATED"/>
    <property type="match status" value="1"/>
</dbReference>
<dbReference type="Pfam" id="PF00005">
    <property type="entry name" value="ABC_tran"/>
    <property type="match status" value="1"/>
</dbReference>
<dbReference type="Pfam" id="PF02687">
    <property type="entry name" value="FtsX"/>
    <property type="match status" value="1"/>
</dbReference>
<dbReference type="Pfam" id="PF12704">
    <property type="entry name" value="MacB_PCD"/>
    <property type="match status" value="1"/>
</dbReference>
<dbReference type="SMART" id="SM00382">
    <property type="entry name" value="AAA"/>
    <property type="match status" value="1"/>
</dbReference>
<dbReference type="SUPFAM" id="SSF52540">
    <property type="entry name" value="P-loop containing nucleoside triphosphate hydrolases"/>
    <property type="match status" value="1"/>
</dbReference>
<dbReference type="PROSITE" id="PS00211">
    <property type="entry name" value="ABC_TRANSPORTER_1"/>
    <property type="match status" value="1"/>
</dbReference>
<dbReference type="PROSITE" id="PS50893">
    <property type="entry name" value="ABC_TRANSPORTER_2"/>
    <property type="match status" value="1"/>
</dbReference>
<dbReference type="PROSITE" id="PS51267">
    <property type="entry name" value="MACB"/>
    <property type="match status" value="1"/>
</dbReference>
<protein>
    <recommendedName>
        <fullName evidence="1">Macrolide export ATP-binding/permease protein MacB</fullName>
        <ecNumber evidence="1">7.6.2.-</ecNumber>
    </recommendedName>
</protein>
<name>MACB_SHISS</name>
<organism>
    <name type="scientific">Shigella sonnei (strain Ss046)</name>
    <dbReference type="NCBI Taxonomy" id="300269"/>
    <lineage>
        <taxon>Bacteria</taxon>
        <taxon>Pseudomonadati</taxon>
        <taxon>Pseudomonadota</taxon>
        <taxon>Gammaproteobacteria</taxon>
        <taxon>Enterobacterales</taxon>
        <taxon>Enterobacteriaceae</taxon>
        <taxon>Shigella</taxon>
    </lineage>
</organism>
<comment type="function">
    <text evidence="1">Part of the tripartite efflux system MacAB-TolC. MacB is a non-canonical ABC transporter that contains transmembrane domains (TMD), which form a pore in the inner membrane, and an ATP-binding domain (NBD), which is responsible for energy generation. Confers resistance against macrolides.</text>
</comment>
<comment type="subunit">
    <text evidence="1">Homodimer. Part of the tripartite efflux system MacAB-TolC, which is composed of an inner membrane transporter, MacB, a periplasmic membrane fusion protein, MacA, and an outer membrane component, TolC. The complex forms a large protein conduit and can translocate molecules across both the inner and outer membranes. Interacts with MacA.</text>
</comment>
<comment type="subcellular location">
    <subcellularLocation>
        <location evidence="1">Cell inner membrane</location>
        <topology evidence="1">Multi-pass membrane protein</topology>
    </subcellularLocation>
</comment>
<comment type="similarity">
    <text evidence="1">Belongs to the ABC transporter superfamily. Macrolide exporter (TC 3.A.1.122) family.</text>
</comment>
<proteinExistence type="inferred from homology"/>